<comment type="function">
    <text evidence="1">Binds to the 23S rRNA.</text>
</comment>
<comment type="similarity">
    <text evidence="1">Belongs to the bacterial ribosomal protein bL9 family.</text>
</comment>
<gene>
    <name evidence="1" type="primary">rplI</name>
    <name type="ordered locus">Acry_1510</name>
</gene>
<reference key="1">
    <citation type="submission" date="2007-05" db="EMBL/GenBank/DDBJ databases">
        <title>Complete sequence of chromosome of Acidiphilium cryptum JF-5.</title>
        <authorList>
            <consortium name="US DOE Joint Genome Institute"/>
            <person name="Copeland A."/>
            <person name="Lucas S."/>
            <person name="Lapidus A."/>
            <person name="Barry K."/>
            <person name="Detter J.C."/>
            <person name="Glavina del Rio T."/>
            <person name="Hammon N."/>
            <person name="Israni S."/>
            <person name="Dalin E."/>
            <person name="Tice H."/>
            <person name="Pitluck S."/>
            <person name="Sims D."/>
            <person name="Brettin T."/>
            <person name="Bruce D."/>
            <person name="Han C."/>
            <person name="Schmutz J."/>
            <person name="Larimer F."/>
            <person name="Land M."/>
            <person name="Hauser L."/>
            <person name="Kyrpides N."/>
            <person name="Kim E."/>
            <person name="Magnuson T."/>
            <person name="Richardson P."/>
        </authorList>
    </citation>
    <scope>NUCLEOTIDE SEQUENCE [LARGE SCALE GENOMIC DNA]</scope>
    <source>
        <strain>JF-5</strain>
    </source>
</reference>
<feature type="chain" id="PRO_1000014729" description="Large ribosomal subunit protein bL9">
    <location>
        <begin position="1"/>
        <end position="186"/>
    </location>
</feature>
<feature type="region of interest" description="Disordered" evidence="2">
    <location>
        <begin position="151"/>
        <end position="186"/>
    </location>
</feature>
<feature type="compositionally biased region" description="Basic and acidic residues" evidence="2">
    <location>
        <begin position="151"/>
        <end position="167"/>
    </location>
</feature>
<feature type="compositionally biased region" description="Acidic residues" evidence="2">
    <location>
        <begin position="168"/>
        <end position="180"/>
    </location>
</feature>
<accession>A5FYN6</accession>
<dbReference type="EMBL" id="CP000697">
    <property type="protein sequence ID" value="ABQ30718.1"/>
    <property type="molecule type" value="Genomic_DNA"/>
</dbReference>
<dbReference type="RefSeq" id="WP_007422451.1">
    <property type="nucleotide sequence ID" value="NC_009484.1"/>
</dbReference>
<dbReference type="SMR" id="A5FYN6"/>
<dbReference type="STRING" id="349163.Acry_1510"/>
<dbReference type="KEGG" id="acr:Acry_1510"/>
<dbReference type="eggNOG" id="COG0359">
    <property type="taxonomic scope" value="Bacteria"/>
</dbReference>
<dbReference type="HOGENOM" id="CLU_078938_1_0_5"/>
<dbReference type="Proteomes" id="UP000000245">
    <property type="component" value="Chromosome"/>
</dbReference>
<dbReference type="GO" id="GO:1990904">
    <property type="term" value="C:ribonucleoprotein complex"/>
    <property type="evidence" value="ECO:0007669"/>
    <property type="project" value="UniProtKB-KW"/>
</dbReference>
<dbReference type="GO" id="GO:0005840">
    <property type="term" value="C:ribosome"/>
    <property type="evidence" value="ECO:0007669"/>
    <property type="project" value="UniProtKB-KW"/>
</dbReference>
<dbReference type="GO" id="GO:0019843">
    <property type="term" value="F:rRNA binding"/>
    <property type="evidence" value="ECO:0007669"/>
    <property type="project" value="UniProtKB-UniRule"/>
</dbReference>
<dbReference type="GO" id="GO:0003735">
    <property type="term" value="F:structural constituent of ribosome"/>
    <property type="evidence" value="ECO:0007669"/>
    <property type="project" value="InterPro"/>
</dbReference>
<dbReference type="GO" id="GO:0006412">
    <property type="term" value="P:translation"/>
    <property type="evidence" value="ECO:0007669"/>
    <property type="project" value="UniProtKB-UniRule"/>
</dbReference>
<dbReference type="Gene3D" id="3.10.430.100">
    <property type="entry name" value="Ribosomal protein L9, C-terminal domain"/>
    <property type="match status" value="1"/>
</dbReference>
<dbReference type="Gene3D" id="3.40.5.10">
    <property type="entry name" value="Ribosomal protein L9, N-terminal domain"/>
    <property type="match status" value="1"/>
</dbReference>
<dbReference type="HAMAP" id="MF_00503">
    <property type="entry name" value="Ribosomal_bL9"/>
    <property type="match status" value="1"/>
</dbReference>
<dbReference type="InterPro" id="IPR000244">
    <property type="entry name" value="Ribosomal_bL9"/>
</dbReference>
<dbReference type="InterPro" id="IPR009027">
    <property type="entry name" value="Ribosomal_bL9/RNase_H1_N"/>
</dbReference>
<dbReference type="InterPro" id="IPR020594">
    <property type="entry name" value="Ribosomal_bL9_bac/chp"/>
</dbReference>
<dbReference type="InterPro" id="IPR020069">
    <property type="entry name" value="Ribosomal_bL9_C"/>
</dbReference>
<dbReference type="InterPro" id="IPR036791">
    <property type="entry name" value="Ribosomal_bL9_C_sf"/>
</dbReference>
<dbReference type="InterPro" id="IPR020070">
    <property type="entry name" value="Ribosomal_bL9_N"/>
</dbReference>
<dbReference type="InterPro" id="IPR036935">
    <property type="entry name" value="Ribosomal_bL9_N_sf"/>
</dbReference>
<dbReference type="NCBIfam" id="TIGR00158">
    <property type="entry name" value="L9"/>
    <property type="match status" value="1"/>
</dbReference>
<dbReference type="PANTHER" id="PTHR21368">
    <property type="entry name" value="50S RIBOSOMAL PROTEIN L9"/>
    <property type="match status" value="1"/>
</dbReference>
<dbReference type="Pfam" id="PF03948">
    <property type="entry name" value="Ribosomal_L9_C"/>
    <property type="match status" value="1"/>
</dbReference>
<dbReference type="Pfam" id="PF01281">
    <property type="entry name" value="Ribosomal_L9_N"/>
    <property type="match status" value="1"/>
</dbReference>
<dbReference type="SUPFAM" id="SSF55658">
    <property type="entry name" value="L9 N-domain-like"/>
    <property type="match status" value="1"/>
</dbReference>
<dbReference type="SUPFAM" id="SSF55653">
    <property type="entry name" value="Ribosomal protein L9 C-domain"/>
    <property type="match status" value="1"/>
</dbReference>
<dbReference type="PROSITE" id="PS00651">
    <property type="entry name" value="RIBOSOMAL_L9"/>
    <property type="match status" value="1"/>
</dbReference>
<keyword id="KW-1185">Reference proteome</keyword>
<keyword id="KW-0687">Ribonucleoprotein</keyword>
<keyword id="KW-0689">Ribosomal protein</keyword>
<keyword id="KW-0694">RNA-binding</keyword>
<keyword id="KW-0699">rRNA-binding</keyword>
<proteinExistence type="inferred from homology"/>
<evidence type="ECO:0000255" key="1">
    <source>
        <dbReference type="HAMAP-Rule" id="MF_00503"/>
    </source>
</evidence>
<evidence type="ECO:0000256" key="2">
    <source>
        <dbReference type="SAM" id="MobiDB-lite"/>
    </source>
</evidence>
<evidence type="ECO:0000305" key="3"/>
<sequence length="186" mass="20544">MAQVELILLQRVEHLGQMGEVVKVKPGYARNFLLPQAKAVRATKQNRERFERERAHLEAQNLKRREEAERVAERVAGLTVTLIRQASDAGSLYGSVTSRDIADACGEASLGITRSQVLLVHPIKTLGLATVRVALHPEVLIDVVVNVARSPEEAEKQARGEAIMREESEYELETGEEVAEGPEQTA</sequence>
<protein>
    <recommendedName>
        <fullName evidence="1">Large ribosomal subunit protein bL9</fullName>
    </recommendedName>
    <alternativeName>
        <fullName evidence="3">50S ribosomal protein L9</fullName>
    </alternativeName>
</protein>
<name>RL9_ACICJ</name>
<organism>
    <name type="scientific">Acidiphilium cryptum (strain JF-5)</name>
    <dbReference type="NCBI Taxonomy" id="349163"/>
    <lineage>
        <taxon>Bacteria</taxon>
        <taxon>Pseudomonadati</taxon>
        <taxon>Pseudomonadota</taxon>
        <taxon>Alphaproteobacteria</taxon>
        <taxon>Acetobacterales</taxon>
        <taxon>Acidocellaceae</taxon>
        <taxon>Acidiphilium</taxon>
    </lineage>
</organism>